<feature type="chain" id="PRO_0000141191" description="Ribose-phosphate pyrophosphokinase">
    <location>
        <begin position="1"/>
        <end position="321"/>
    </location>
</feature>
<feature type="active site" evidence="1">
    <location>
        <position position="202"/>
    </location>
</feature>
<feature type="binding site" evidence="1">
    <location>
        <begin position="44"/>
        <end position="46"/>
    </location>
    <ligand>
        <name>ATP</name>
        <dbReference type="ChEBI" id="CHEBI:30616"/>
    </ligand>
</feature>
<feature type="binding site" evidence="1">
    <location>
        <begin position="103"/>
        <end position="104"/>
    </location>
    <ligand>
        <name>ATP</name>
        <dbReference type="ChEBI" id="CHEBI:30616"/>
    </ligand>
</feature>
<feature type="binding site" evidence="1">
    <location>
        <position position="137"/>
    </location>
    <ligand>
        <name>Mg(2+)</name>
        <dbReference type="ChEBI" id="CHEBI:18420"/>
        <label>1</label>
    </ligand>
</feature>
<feature type="binding site" evidence="1">
    <location>
        <position position="179"/>
    </location>
    <ligand>
        <name>Mg(2+)</name>
        <dbReference type="ChEBI" id="CHEBI:18420"/>
        <label>2</label>
    </ligand>
</feature>
<feature type="binding site" evidence="1">
    <location>
        <position position="204"/>
    </location>
    <ligand>
        <name>D-ribose 5-phosphate</name>
        <dbReference type="ChEBI" id="CHEBI:78346"/>
    </ligand>
</feature>
<feature type="binding site" evidence="1">
    <location>
        <position position="228"/>
    </location>
    <ligand>
        <name>D-ribose 5-phosphate</name>
        <dbReference type="ChEBI" id="CHEBI:78346"/>
    </ligand>
</feature>
<feature type="binding site" evidence="1">
    <location>
        <begin position="232"/>
        <end position="236"/>
    </location>
    <ligand>
        <name>D-ribose 5-phosphate</name>
        <dbReference type="ChEBI" id="CHEBI:78346"/>
    </ligand>
</feature>
<name>KPRS_STAAW</name>
<reference key="1">
    <citation type="journal article" date="2002" name="Lancet">
        <title>Genome and virulence determinants of high virulence community-acquired MRSA.</title>
        <authorList>
            <person name="Baba T."/>
            <person name="Takeuchi F."/>
            <person name="Kuroda M."/>
            <person name="Yuzawa H."/>
            <person name="Aoki K."/>
            <person name="Oguchi A."/>
            <person name="Nagai Y."/>
            <person name="Iwama N."/>
            <person name="Asano K."/>
            <person name="Naimi T."/>
            <person name="Kuroda H."/>
            <person name="Cui L."/>
            <person name="Yamamoto K."/>
            <person name="Hiramatsu K."/>
        </authorList>
    </citation>
    <scope>NUCLEOTIDE SEQUENCE [LARGE SCALE GENOMIC DNA]</scope>
    <source>
        <strain>MW2</strain>
    </source>
</reference>
<keyword id="KW-0067">ATP-binding</keyword>
<keyword id="KW-0963">Cytoplasm</keyword>
<keyword id="KW-0418">Kinase</keyword>
<keyword id="KW-0460">Magnesium</keyword>
<keyword id="KW-0479">Metal-binding</keyword>
<keyword id="KW-0545">Nucleotide biosynthesis</keyword>
<keyword id="KW-0547">Nucleotide-binding</keyword>
<keyword id="KW-0808">Transferase</keyword>
<protein>
    <recommendedName>
        <fullName evidence="1">Ribose-phosphate pyrophosphokinase</fullName>
        <shortName evidence="1">RPPK</shortName>
        <ecNumber evidence="1">2.7.6.1</ecNumber>
    </recommendedName>
    <alternativeName>
        <fullName evidence="1">5-phospho-D-ribosyl alpha-1-diphosphate synthase</fullName>
    </alternativeName>
    <alternativeName>
        <fullName evidence="1">Phosphoribosyl diphosphate synthase</fullName>
    </alternativeName>
    <alternativeName>
        <fullName evidence="1">Phosphoribosyl pyrophosphate synthase</fullName>
        <shortName evidence="1">P-Rib-PP synthase</shortName>
        <shortName evidence="1">PRPP synthase</shortName>
        <shortName evidence="1">PRPPase</shortName>
    </alternativeName>
</protein>
<organism>
    <name type="scientific">Staphylococcus aureus (strain MW2)</name>
    <dbReference type="NCBI Taxonomy" id="196620"/>
    <lineage>
        <taxon>Bacteria</taxon>
        <taxon>Bacillati</taxon>
        <taxon>Bacillota</taxon>
        <taxon>Bacilli</taxon>
        <taxon>Bacillales</taxon>
        <taxon>Staphylococcaceae</taxon>
        <taxon>Staphylococcus</taxon>
    </lineage>
</organism>
<gene>
    <name evidence="1" type="primary">prs</name>
    <name type="ordered locus">MW0455</name>
</gene>
<accession>P65238</accession>
<accession>Q99WA3</accession>
<sequence length="321" mass="35284">MLNNEYKNSSLKIFSLKGNEALAQEVADQVGIELGKCSVKRFSDGEIQINIEESIRGCDVFIIQPTSYPVNLHLMELLIMIDACKRASAATINIVVPYYGYARQDRKARSREPITAKLVANLIETAGATRMIALDLHAPQIQGFFDIPIDHLMGVPILAKHFKDDPNINPEECVVVSPDHGGVTRARKLADILKTPIAIIDKRRPRPNVAEVMNIVGEIEGRTAIIIDDIIDTAGTITLAAQALKDKGAKEVYACCTHPVLSGPAKERIENSAIKELIVTNSIHLDEDRKPSNTKELSVAGLIAQAIIRVYERESVSVLFD</sequence>
<comment type="function">
    <text evidence="1">Involved in the biosynthesis of the central metabolite phospho-alpha-D-ribosyl-1-pyrophosphate (PRPP) via the transfer of pyrophosphoryl group from ATP to 1-hydroxyl of ribose-5-phosphate (Rib-5-P).</text>
</comment>
<comment type="catalytic activity">
    <reaction evidence="1">
        <text>D-ribose 5-phosphate + ATP = 5-phospho-alpha-D-ribose 1-diphosphate + AMP + H(+)</text>
        <dbReference type="Rhea" id="RHEA:15609"/>
        <dbReference type="ChEBI" id="CHEBI:15378"/>
        <dbReference type="ChEBI" id="CHEBI:30616"/>
        <dbReference type="ChEBI" id="CHEBI:58017"/>
        <dbReference type="ChEBI" id="CHEBI:78346"/>
        <dbReference type="ChEBI" id="CHEBI:456215"/>
        <dbReference type="EC" id="2.7.6.1"/>
    </reaction>
</comment>
<comment type="cofactor">
    <cofactor evidence="1">
        <name>Mg(2+)</name>
        <dbReference type="ChEBI" id="CHEBI:18420"/>
    </cofactor>
    <text evidence="1">Binds 2 Mg(2+) ions per subunit.</text>
</comment>
<comment type="pathway">
    <text evidence="1">Metabolic intermediate biosynthesis; 5-phospho-alpha-D-ribose 1-diphosphate biosynthesis; 5-phospho-alpha-D-ribose 1-diphosphate from D-ribose 5-phosphate (route I): step 1/1.</text>
</comment>
<comment type="subunit">
    <text evidence="1">Homohexamer.</text>
</comment>
<comment type="subcellular location">
    <subcellularLocation>
        <location evidence="1">Cytoplasm</location>
    </subcellularLocation>
</comment>
<comment type="similarity">
    <text evidence="1">Belongs to the ribose-phosphate pyrophosphokinase family. Class I subfamily.</text>
</comment>
<evidence type="ECO:0000255" key="1">
    <source>
        <dbReference type="HAMAP-Rule" id="MF_00583"/>
    </source>
</evidence>
<dbReference type="EC" id="2.7.6.1" evidence="1"/>
<dbReference type="EMBL" id="BA000033">
    <property type="protein sequence ID" value="BAB94320.1"/>
    <property type="molecule type" value="Genomic_DNA"/>
</dbReference>
<dbReference type="RefSeq" id="WP_000933774.1">
    <property type="nucleotide sequence ID" value="NC_003923.1"/>
</dbReference>
<dbReference type="SMR" id="P65238"/>
<dbReference type="KEGG" id="sam:MW0455"/>
<dbReference type="HOGENOM" id="CLU_033546_1_0_9"/>
<dbReference type="UniPathway" id="UPA00087">
    <property type="reaction ID" value="UER00172"/>
</dbReference>
<dbReference type="GO" id="GO:0005737">
    <property type="term" value="C:cytoplasm"/>
    <property type="evidence" value="ECO:0007669"/>
    <property type="project" value="UniProtKB-SubCell"/>
</dbReference>
<dbReference type="GO" id="GO:0002189">
    <property type="term" value="C:ribose phosphate diphosphokinase complex"/>
    <property type="evidence" value="ECO:0007669"/>
    <property type="project" value="TreeGrafter"/>
</dbReference>
<dbReference type="GO" id="GO:0005524">
    <property type="term" value="F:ATP binding"/>
    <property type="evidence" value="ECO:0007669"/>
    <property type="project" value="UniProtKB-KW"/>
</dbReference>
<dbReference type="GO" id="GO:0016301">
    <property type="term" value="F:kinase activity"/>
    <property type="evidence" value="ECO:0007669"/>
    <property type="project" value="UniProtKB-KW"/>
</dbReference>
<dbReference type="GO" id="GO:0000287">
    <property type="term" value="F:magnesium ion binding"/>
    <property type="evidence" value="ECO:0007669"/>
    <property type="project" value="UniProtKB-UniRule"/>
</dbReference>
<dbReference type="GO" id="GO:0004749">
    <property type="term" value="F:ribose phosphate diphosphokinase activity"/>
    <property type="evidence" value="ECO:0007669"/>
    <property type="project" value="UniProtKB-UniRule"/>
</dbReference>
<dbReference type="GO" id="GO:0006015">
    <property type="term" value="P:5-phosphoribose 1-diphosphate biosynthetic process"/>
    <property type="evidence" value="ECO:0007669"/>
    <property type="project" value="UniProtKB-UniRule"/>
</dbReference>
<dbReference type="GO" id="GO:0006164">
    <property type="term" value="P:purine nucleotide biosynthetic process"/>
    <property type="evidence" value="ECO:0007669"/>
    <property type="project" value="TreeGrafter"/>
</dbReference>
<dbReference type="GO" id="GO:0009156">
    <property type="term" value="P:ribonucleoside monophosphate biosynthetic process"/>
    <property type="evidence" value="ECO:0007669"/>
    <property type="project" value="InterPro"/>
</dbReference>
<dbReference type="CDD" id="cd06223">
    <property type="entry name" value="PRTases_typeI"/>
    <property type="match status" value="1"/>
</dbReference>
<dbReference type="FunFam" id="3.40.50.2020:FF:000002">
    <property type="entry name" value="Ribose-phosphate pyrophosphokinase"/>
    <property type="match status" value="1"/>
</dbReference>
<dbReference type="FunFam" id="3.40.50.2020:FF:000014">
    <property type="entry name" value="Ribose-phosphate pyrophosphokinase 1"/>
    <property type="match status" value="1"/>
</dbReference>
<dbReference type="Gene3D" id="3.40.50.2020">
    <property type="match status" value="2"/>
</dbReference>
<dbReference type="HAMAP" id="MF_00583_B">
    <property type="entry name" value="RibP_PPkinase_B"/>
    <property type="match status" value="1"/>
</dbReference>
<dbReference type="InterPro" id="IPR000842">
    <property type="entry name" value="PRib_PP_synth_CS"/>
</dbReference>
<dbReference type="InterPro" id="IPR029099">
    <property type="entry name" value="Pribosyltran_N"/>
</dbReference>
<dbReference type="InterPro" id="IPR000836">
    <property type="entry name" value="PRibTrfase_dom"/>
</dbReference>
<dbReference type="InterPro" id="IPR029057">
    <property type="entry name" value="PRTase-like"/>
</dbReference>
<dbReference type="InterPro" id="IPR005946">
    <property type="entry name" value="Rib-P_diPkinase"/>
</dbReference>
<dbReference type="InterPro" id="IPR037515">
    <property type="entry name" value="Rib-P_diPkinase_bac"/>
</dbReference>
<dbReference type="NCBIfam" id="NF002320">
    <property type="entry name" value="PRK01259.1"/>
    <property type="match status" value="1"/>
</dbReference>
<dbReference type="NCBIfam" id="NF002618">
    <property type="entry name" value="PRK02269.1"/>
    <property type="match status" value="1"/>
</dbReference>
<dbReference type="NCBIfam" id="TIGR01251">
    <property type="entry name" value="ribP_PPkin"/>
    <property type="match status" value="1"/>
</dbReference>
<dbReference type="PANTHER" id="PTHR10210">
    <property type="entry name" value="RIBOSE-PHOSPHATE DIPHOSPHOKINASE FAMILY MEMBER"/>
    <property type="match status" value="1"/>
</dbReference>
<dbReference type="PANTHER" id="PTHR10210:SF41">
    <property type="entry name" value="RIBOSE-PHOSPHATE PYROPHOSPHOKINASE 1, CHLOROPLASTIC"/>
    <property type="match status" value="1"/>
</dbReference>
<dbReference type="Pfam" id="PF14572">
    <property type="entry name" value="Pribosyl_synth"/>
    <property type="match status" value="1"/>
</dbReference>
<dbReference type="Pfam" id="PF13793">
    <property type="entry name" value="Pribosyltran_N"/>
    <property type="match status" value="1"/>
</dbReference>
<dbReference type="SMART" id="SM01400">
    <property type="entry name" value="Pribosyltran_N"/>
    <property type="match status" value="1"/>
</dbReference>
<dbReference type="SUPFAM" id="SSF53271">
    <property type="entry name" value="PRTase-like"/>
    <property type="match status" value="1"/>
</dbReference>
<dbReference type="PROSITE" id="PS00114">
    <property type="entry name" value="PRPP_SYNTHASE"/>
    <property type="match status" value="1"/>
</dbReference>
<proteinExistence type="inferred from homology"/>